<accession>A1WC09</accession>
<organism>
    <name type="scientific">Acidovorax sp. (strain JS42)</name>
    <dbReference type="NCBI Taxonomy" id="232721"/>
    <lineage>
        <taxon>Bacteria</taxon>
        <taxon>Pseudomonadati</taxon>
        <taxon>Pseudomonadota</taxon>
        <taxon>Betaproteobacteria</taxon>
        <taxon>Burkholderiales</taxon>
        <taxon>Comamonadaceae</taxon>
        <taxon>Acidovorax</taxon>
    </lineage>
</organism>
<reference key="1">
    <citation type="submission" date="2006-12" db="EMBL/GenBank/DDBJ databases">
        <title>Complete sequence of chromosome 1 of Acidovorax sp. JS42.</title>
        <authorList>
            <person name="Copeland A."/>
            <person name="Lucas S."/>
            <person name="Lapidus A."/>
            <person name="Barry K."/>
            <person name="Detter J.C."/>
            <person name="Glavina del Rio T."/>
            <person name="Dalin E."/>
            <person name="Tice H."/>
            <person name="Pitluck S."/>
            <person name="Chertkov O."/>
            <person name="Brettin T."/>
            <person name="Bruce D."/>
            <person name="Han C."/>
            <person name="Tapia R."/>
            <person name="Gilna P."/>
            <person name="Schmutz J."/>
            <person name="Larimer F."/>
            <person name="Land M."/>
            <person name="Hauser L."/>
            <person name="Kyrpides N."/>
            <person name="Kim E."/>
            <person name="Stahl D."/>
            <person name="Richardson P."/>
        </authorList>
    </citation>
    <scope>NUCLEOTIDE SEQUENCE [LARGE SCALE GENOMIC DNA]</scope>
    <source>
        <strain>JS42</strain>
    </source>
</reference>
<name>MRAY_ACISJ</name>
<sequence>MLLMLTQWLQGLSPELSFLRVFQYLTLRAVMAALTALLIGLIAGPKVIRMLTSLKIGQPIRGYAMQTHLSKSGTPTMGGVLILGSIAISTLLWFDLSNRFVWIVLAVTLGFGAIGWVDDWRKVVNKDPEGMRSREKYFWQSVIGLLAALYLVFSISENSNTRVFELFITWVQSGFLMDLPPKAGLLVPFFKEVSYPLGVLGFVILTYLVIVGSSNAVNLTDGLDGLAIMPVIMVGASLGIFAYVTGNAGYAKYLLFPYIAGSGELLIFCAAMAGAGLAFLWFNTHPAQVFMGDVGALALGAALGTIAVIVRQEIVLAIMGGIFVVEALSVMLQVTWFKYTKRKYGEGRRLLKMAPLHHHFEKSGWKETQVVVRFWIITMLLCLVGLTTLKLR</sequence>
<keyword id="KW-0131">Cell cycle</keyword>
<keyword id="KW-0132">Cell division</keyword>
<keyword id="KW-0997">Cell inner membrane</keyword>
<keyword id="KW-1003">Cell membrane</keyword>
<keyword id="KW-0133">Cell shape</keyword>
<keyword id="KW-0961">Cell wall biogenesis/degradation</keyword>
<keyword id="KW-0460">Magnesium</keyword>
<keyword id="KW-0472">Membrane</keyword>
<keyword id="KW-0479">Metal-binding</keyword>
<keyword id="KW-0573">Peptidoglycan synthesis</keyword>
<keyword id="KW-0808">Transferase</keyword>
<keyword id="KW-0812">Transmembrane</keyword>
<keyword id="KW-1133">Transmembrane helix</keyword>
<proteinExistence type="inferred from homology"/>
<protein>
    <recommendedName>
        <fullName evidence="1">Phospho-N-acetylmuramoyl-pentapeptide-transferase</fullName>
        <ecNumber evidence="1">2.7.8.13</ecNumber>
    </recommendedName>
    <alternativeName>
        <fullName evidence="1">UDP-MurNAc-pentapeptide phosphotransferase</fullName>
    </alternativeName>
</protein>
<dbReference type="EC" id="2.7.8.13" evidence="1"/>
<dbReference type="EMBL" id="CP000539">
    <property type="protein sequence ID" value="ABM43784.1"/>
    <property type="molecule type" value="Genomic_DNA"/>
</dbReference>
<dbReference type="SMR" id="A1WC09"/>
<dbReference type="STRING" id="232721.Ajs_3673"/>
<dbReference type="KEGG" id="ajs:Ajs_3673"/>
<dbReference type="eggNOG" id="COG0472">
    <property type="taxonomic scope" value="Bacteria"/>
</dbReference>
<dbReference type="HOGENOM" id="CLU_023982_0_0_4"/>
<dbReference type="UniPathway" id="UPA00219"/>
<dbReference type="Proteomes" id="UP000000645">
    <property type="component" value="Chromosome"/>
</dbReference>
<dbReference type="GO" id="GO:0005886">
    <property type="term" value="C:plasma membrane"/>
    <property type="evidence" value="ECO:0007669"/>
    <property type="project" value="UniProtKB-SubCell"/>
</dbReference>
<dbReference type="GO" id="GO:0046872">
    <property type="term" value="F:metal ion binding"/>
    <property type="evidence" value="ECO:0007669"/>
    <property type="project" value="UniProtKB-KW"/>
</dbReference>
<dbReference type="GO" id="GO:0008963">
    <property type="term" value="F:phospho-N-acetylmuramoyl-pentapeptide-transferase activity"/>
    <property type="evidence" value="ECO:0007669"/>
    <property type="project" value="UniProtKB-UniRule"/>
</dbReference>
<dbReference type="GO" id="GO:0051992">
    <property type="term" value="F:UDP-N-acetylmuramoyl-L-alanyl-D-glutamyl-meso-2,6-diaminopimelyl-D-alanyl-D-alanine:undecaprenyl-phosphate transferase activity"/>
    <property type="evidence" value="ECO:0007669"/>
    <property type="project" value="RHEA"/>
</dbReference>
<dbReference type="GO" id="GO:0051301">
    <property type="term" value="P:cell division"/>
    <property type="evidence" value="ECO:0007669"/>
    <property type="project" value="UniProtKB-KW"/>
</dbReference>
<dbReference type="GO" id="GO:0071555">
    <property type="term" value="P:cell wall organization"/>
    <property type="evidence" value="ECO:0007669"/>
    <property type="project" value="UniProtKB-KW"/>
</dbReference>
<dbReference type="GO" id="GO:0009252">
    <property type="term" value="P:peptidoglycan biosynthetic process"/>
    <property type="evidence" value="ECO:0007669"/>
    <property type="project" value="UniProtKB-UniRule"/>
</dbReference>
<dbReference type="GO" id="GO:0008360">
    <property type="term" value="P:regulation of cell shape"/>
    <property type="evidence" value="ECO:0007669"/>
    <property type="project" value="UniProtKB-KW"/>
</dbReference>
<dbReference type="CDD" id="cd06852">
    <property type="entry name" value="GT_MraY"/>
    <property type="match status" value="1"/>
</dbReference>
<dbReference type="HAMAP" id="MF_00038">
    <property type="entry name" value="MraY"/>
    <property type="match status" value="1"/>
</dbReference>
<dbReference type="InterPro" id="IPR000715">
    <property type="entry name" value="Glycosyl_transferase_4"/>
</dbReference>
<dbReference type="InterPro" id="IPR003524">
    <property type="entry name" value="PNAcMuramoyl-5peptid_Trfase"/>
</dbReference>
<dbReference type="InterPro" id="IPR018480">
    <property type="entry name" value="PNAcMuramoyl-5peptid_Trfase_CS"/>
</dbReference>
<dbReference type="NCBIfam" id="TIGR00445">
    <property type="entry name" value="mraY"/>
    <property type="match status" value="1"/>
</dbReference>
<dbReference type="PANTHER" id="PTHR22926">
    <property type="entry name" value="PHOSPHO-N-ACETYLMURAMOYL-PENTAPEPTIDE-TRANSFERASE"/>
    <property type="match status" value="1"/>
</dbReference>
<dbReference type="PANTHER" id="PTHR22926:SF5">
    <property type="entry name" value="PHOSPHO-N-ACETYLMURAMOYL-PENTAPEPTIDE-TRANSFERASE HOMOLOG"/>
    <property type="match status" value="1"/>
</dbReference>
<dbReference type="Pfam" id="PF00953">
    <property type="entry name" value="Glycos_transf_4"/>
    <property type="match status" value="1"/>
</dbReference>
<dbReference type="Pfam" id="PF10555">
    <property type="entry name" value="MraY_sig1"/>
    <property type="match status" value="1"/>
</dbReference>
<dbReference type="PROSITE" id="PS01347">
    <property type="entry name" value="MRAY_1"/>
    <property type="match status" value="1"/>
</dbReference>
<dbReference type="PROSITE" id="PS01348">
    <property type="entry name" value="MRAY_2"/>
    <property type="match status" value="1"/>
</dbReference>
<gene>
    <name evidence="1" type="primary">mraY</name>
    <name type="ordered locus">Ajs_3673</name>
</gene>
<feature type="chain" id="PRO_1000002929" description="Phospho-N-acetylmuramoyl-pentapeptide-transferase">
    <location>
        <begin position="1"/>
        <end position="392"/>
    </location>
</feature>
<feature type="transmembrane region" description="Helical" evidence="1">
    <location>
        <begin position="24"/>
        <end position="44"/>
    </location>
</feature>
<feature type="transmembrane region" description="Helical" evidence="1">
    <location>
        <begin position="76"/>
        <end position="96"/>
    </location>
</feature>
<feature type="transmembrane region" description="Helical" evidence="1">
    <location>
        <begin position="100"/>
        <end position="120"/>
    </location>
</feature>
<feature type="transmembrane region" description="Helical" evidence="1">
    <location>
        <begin position="137"/>
        <end position="157"/>
    </location>
</feature>
<feature type="transmembrane region" description="Helical" evidence="1">
    <location>
        <begin position="167"/>
        <end position="187"/>
    </location>
</feature>
<feature type="transmembrane region" description="Helical" evidence="1">
    <location>
        <begin position="193"/>
        <end position="213"/>
    </location>
</feature>
<feature type="transmembrane region" description="Helical" evidence="1">
    <location>
        <begin position="225"/>
        <end position="245"/>
    </location>
</feature>
<feature type="transmembrane region" description="Helical" evidence="1">
    <location>
        <begin position="262"/>
        <end position="282"/>
    </location>
</feature>
<feature type="transmembrane region" description="Helical" evidence="1">
    <location>
        <begin position="289"/>
        <end position="309"/>
    </location>
</feature>
<feature type="transmembrane region" description="Helical" evidence="1">
    <location>
        <begin position="314"/>
        <end position="334"/>
    </location>
</feature>
<feature type="transmembrane region" description="Helical" evidence="1">
    <location>
        <begin position="369"/>
        <end position="389"/>
    </location>
</feature>
<comment type="function">
    <text evidence="1">Catalyzes the initial step of the lipid cycle reactions in the biosynthesis of the cell wall peptidoglycan: transfers peptidoglycan precursor phospho-MurNAc-pentapeptide from UDP-MurNAc-pentapeptide onto the lipid carrier undecaprenyl phosphate, yielding undecaprenyl-pyrophosphoryl-MurNAc-pentapeptide, known as lipid I.</text>
</comment>
<comment type="catalytic activity">
    <reaction evidence="1">
        <text>UDP-N-acetyl-alpha-D-muramoyl-L-alanyl-gamma-D-glutamyl-meso-2,6-diaminopimeloyl-D-alanyl-D-alanine + di-trans,octa-cis-undecaprenyl phosphate = di-trans,octa-cis-undecaprenyl diphospho-N-acetyl-alpha-D-muramoyl-L-alanyl-D-glutamyl-meso-2,6-diaminopimeloyl-D-alanyl-D-alanine + UMP</text>
        <dbReference type="Rhea" id="RHEA:28386"/>
        <dbReference type="ChEBI" id="CHEBI:57865"/>
        <dbReference type="ChEBI" id="CHEBI:60392"/>
        <dbReference type="ChEBI" id="CHEBI:61386"/>
        <dbReference type="ChEBI" id="CHEBI:61387"/>
        <dbReference type="EC" id="2.7.8.13"/>
    </reaction>
</comment>
<comment type="cofactor">
    <cofactor evidence="1">
        <name>Mg(2+)</name>
        <dbReference type="ChEBI" id="CHEBI:18420"/>
    </cofactor>
</comment>
<comment type="pathway">
    <text evidence="1">Cell wall biogenesis; peptidoglycan biosynthesis.</text>
</comment>
<comment type="subcellular location">
    <subcellularLocation>
        <location evidence="1">Cell inner membrane</location>
        <topology evidence="1">Multi-pass membrane protein</topology>
    </subcellularLocation>
</comment>
<comment type="similarity">
    <text evidence="1">Belongs to the glycosyltransferase 4 family. MraY subfamily.</text>
</comment>
<evidence type="ECO:0000255" key="1">
    <source>
        <dbReference type="HAMAP-Rule" id="MF_00038"/>
    </source>
</evidence>